<organism>
    <name type="scientific">Francisella tularensis subsp. holarctica (strain FTNF002-00 / FTA)</name>
    <dbReference type="NCBI Taxonomy" id="458234"/>
    <lineage>
        <taxon>Bacteria</taxon>
        <taxon>Pseudomonadati</taxon>
        <taxon>Pseudomonadota</taxon>
        <taxon>Gammaproteobacteria</taxon>
        <taxon>Thiotrichales</taxon>
        <taxon>Francisellaceae</taxon>
        <taxon>Francisella</taxon>
    </lineage>
</organism>
<name>Y1322_FRATF</name>
<proteinExistence type="inferred from homology"/>
<protein>
    <recommendedName>
        <fullName evidence="1">UPF0145 protein FTA_1322</fullName>
    </recommendedName>
</protein>
<feature type="chain" id="PRO_1000012998" description="UPF0145 protein FTA_1322">
    <location>
        <begin position="1"/>
        <end position="106"/>
    </location>
</feature>
<evidence type="ECO:0000255" key="1">
    <source>
        <dbReference type="HAMAP-Rule" id="MF_00338"/>
    </source>
</evidence>
<accession>A7NCU4</accession>
<gene>
    <name type="ordered locus">FTA_1322</name>
</gene>
<dbReference type="EMBL" id="CP000803">
    <property type="protein sequence ID" value="ABU61797.1"/>
    <property type="molecule type" value="Genomic_DNA"/>
</dbReference>
<dbReference type="RefSeq" id="WP_003016377.1">
    <property type="nucleotide sequence ID" value="NC_009749.1"/>
</dbReference>
<dbReference type="SMR" id="A7NCU4"/>
<dbReference type="KEGG" id="fta:FTA_1322"/>
<dbReference type="HOGENOM" id="CLU_117144_1_1_6"/>
<dbReference type="Gene3D" id="3.30.110.70">
    <property type="entry name" value="Hypothetical protein apc22750. Chain B"/>
    <property type="match status" value="1"/>
</dbReference>
<dbReference type="HAMAP" id="MF_00338">
    <property type="entry name" value="UPF0145"/>
    <property type="match status" value="1"/>
</dbReference>
<dbReference type="InterPro" id="IPR035439">
    <property type="entry name" value="UPF0145_dom_sf"/>
</dbReference>
<dbReference type="InterPro" id="IPR002765">
    <property type="entry name" value="UPF0145_YbjQ-like"/>
</dbReference>
<dbReference type="PANTHER" id="PTHR34068">
    <property type="entry name" value="UPF0145 PROTEIN YBJQ"/>
    <property type="match status" value="1"/>
</dbReference>
<dbReference type="PANTHER" id="PTHR34068:SF1">
    <property type="entry name" value="UPF0145 PROTEIN YBJQ"/>
    <property type="match status" value="1"/>
</dbReference>
<dbReference type="Pfam" id="PF01906">
    <property type="entry name" value="YbjQ_1"/>
    <property type="match status" value="1"/>
</dbReference>
<dbReference type="SUPFAM" id="SSF117782">
    <property type="entry name" value="YbjQ-like"/>
    <property type="match status" value="1"/>
</dbReference>
<sequence>MILTTADTLGKREIIEYKGLVTGIIVRTPTITQGILGGLKNIIGGKNTSYTNVCKEARLHAEQEMINQAKELGANAIVAIRYDSSSLGGNTSGTEVFCYGTAVVVR</sequence>
<comment type="similarity">
    <text evidence="1">Belongs to the UPF0145 family.</text>
</comment>
<reference key="1">
    <citation type="journal article" date="2009" name="PLoS ONE">
        <title>Complete genome sequence of Francisella tularensis subspecies holarctica FTNF002-00.</title>
        <authorList>
            <person name="Barabote R.D."/>
            <person name="Xie G."/>
            <person name="Brettin T.S."/>
            <person name="Hinrichs S.H."/>
            <person name="Fey P.D."/>
            <person name="Jay J.J."/>
            <person name="Engle J.L."/>
            <person name="Godbole S.D."/>
            <person name="Noronha J.M."/>
            <person name="Scheuermann R.H."/>
            <person name="Zhou L.W."/>
            <person name="Lion C."/>
            <person name="Dempsey M.P."/>
        </authorList>
    </citation>
    <scope>NUCLEOTIDE SEQUENCE [LARGE SCALE GENOMIC DNA]</scope>
    <source>
        <strain>FTNF002-00 / FTA</strain>
    </source>
</reference>